<feature type="signal peptide" evidence="2">
    <location>
        <begin position="1"/>
        <end position="21"/>
    </location>
</feature>
<feature type="chain" id="PRO_5013986108" description="Class I hydrophobin POH3">
    <location>
        <begin position="22"/>
        <end position="113"/>
    </location>
</feature>
<feature type="glycosylation site" description="N-linked (GlcNAc...) asparagine" evidence="3">
    <location>
        <position position="110"/>
    </location>
</feature>
<feature type="disulfide bond" evidence="1">
    <location>
        <begin position="32"/>
        <end position="92"/>
    </location>
</feature>
<feature type="disulfide bond" evidence="1">
    <location>
        <begin position="39"/>
        <end position="86"/>
    </location>
</feature>
<feature type="disulfide bond" evidence="1">
    <location>
        <begin position="40"/>
        <end position="73"/>
    </location>
</feature>
<feature type="disulfide bond" evidence="1">
    <location>
        <begin position="93"/>
        <end position="106"/>
    </location>
</feature>
<name>POH3_PLEOS</name>
<sequence>MFSRVIFCTFLILPLLAAATAIPRTNPPAPTCTTGSLQCCNSVQAASNPVVGLLAGLLGIVLGPITGQVGLTCSPITVIGVGGTSCSAQTVCCNGNSFNGLIVVGCSPVNISL</sequence>
<accession>O60048</accession>
<proteinExistence type="evidence at protein level"/>
<gene>
    <name evidence="6" type="primary">POH3</name>
</gene>
<protein>
    <recommendedName>
        <fullName evidence="6">Class I hydrophobin POH3</fullName>
    </recommendedName>
</protein>
<comment type="function">
    <text evidence="5 7">Aerial growth, conidiation, and dispersal of filamentous fungi in the environment rely upon a capability of their secreting small amphipathic proteins called hydrophobins (HPBs) with low sequence identity. Class I can self-assemble into an outermost layer of rodlet bundles on aerial cell surfaces, conferring cellular hydrophobicity that supports fungal growth, development and dispersal; whereas Class II form highly ordered films at water-air interfaces through intermolecular interactions but contribute nothing to the rodlet structure (Probable). POH3 is a class I hydrophobin that causes a large drop in the water-surface tension, enabling hyphae to breach the interface and grow into the air, in both the primary and the secondary mycelium. In the latter mycelium POH3 maight also play a role in the emergence of fruiting bodies (PubMed:9846731). Secreted POH3 could also play a role in facilitating lignin degradation (PubMed:9846731).</text>
</comment>
<comment type="subunit">
    <text evidence="5">Self-assembles to form functional amyloid fibrils called rodlets. Self-assembly into fibrillar rodlets occurs spontaneously at hydrophobic:hydrophilic interfaces and the rodlets further associate laterally to form amphipathic monolayers.</text>
</comment>
<comment type="subcellular location">
    <subcellularLocation>
        <location evidence="5">Secreted</location>
    </subcellularLocation>
    <subcellularLocation>
        <location evidence="5">Secreted</location>
        <location evidence="5">Cell wall</location>
    </subcellularLocation>
</comment>
<comment type="tissue specificity">
    <text evidence="4 5">Expressionn is switched off in the fruiting bodies but abundantly expressed in the vegetative mycelium of both monokaryon and dikaryon.</text>
</comment>
<comment type="similarity">
    <text evidence="7">Belongs to the fungal hydrophobin family.</text>
</comment>
<keyword id="KW-0134">Cell wall</keyword>
<keyword id="KW-1015">Disulfide bond</keyword>
<keyword id="KW-0325">Glycoprotein</keyword>
<keyword id="KW-0964">Secreted</keyword>
<keyword id="KW-0732">Signal</keyword>
<evidence type="ECO:0000250" key="1">
    <source>
        <dbReference type="UniProtKB" id="Q04571"/>
    </source>
</evidence>
<evidence type="ECO:0000255" key="2"/>
<evidence type="ECO:0000255" key="3">
    <source>
        <dbReference type="PROSITE-ProRule" id="PRU00498"/>
    </source>
</evidence>
<evidence type="ECO:0000269" key="4">
    <source>
    </source>
</evidence>
<evidence type="ECO:0000269" key="5">
    <source>
    </source>
</evidence>
<evidence type="ECO:0000303" key="6">
    <source>
    </source>
</evidence>
<evidence type="ECO:0000305" key="7"/>
<reference key="1">
    <citation type="journal article" date="1998" name="Microbiology">
        <title>Identification of three differentially expressed hydrophobins in Pleurotus ostreatus (oyster mushroom).</title>
        <authorList>
            <person name="Asgeirsddttir S.A."/>
            <person name="de Vries O.M.H."/>
            <person name="Wessels J.G.H."/>
        </authorList>
    </citation>
    <scope>NUCLEOTIDE SEQUENCE [GENOMIC DNA]</scope>
    <scope>TISSUE SPECIFICITY</scope>
    <scope>SUBCELLULAR LOCATION</scope>
    <scope>SUBUNIT</scope>
    <scope>FUNCTION</scope>
    <source>
        <strain>R7</strain>
    </source>
</reference>
<reference key="2">
    <citation type="journal article" date="2021" name="Microbiol. Res.">
        <title>Identification of hydrophobin genes and their physiological functions related to growth and development in Pleurotus ostreatus.</title>
        <authorList>
            <person name="Xu D."/>
            <person name="Wang Y."/>
            <person name="Keerio A.A."/>
            <person name="Ma A."/>
        </authorList>
    </citation>
    <scope>TISSUE SPECIFICITY</scope>
</reference>
<organism>
    <name type="scientific">Pleurotus ostreatus</name>
    <name type="common">Oyster mushroom</name>
    <name type="synonym">White-rot fungus</name>
    <dbReference type="NCBI Taxonomy" id="5322"/>
    <lineage>
        <taxon>Eukaryota</taxon>
        <taxon>Fungi</taxon>
        <taxon>Dikarya</taxon>
        <taxon>Basidiomycota</taxon>
        <taxon>Agaricomycotina</taxon>
        <taxon>Agaricomycetes</taxon>
        <taxon>Agaricomycetidae</taxon>
        <taxon>Agaricales</taxon>
        <taxon>Pleurotineae</taxon>
        <taxon>Pleurotaceae</taxon>
        <taxon>Pleurotus</taxon>
    </lineage>
</organism>
<dbReference type="EMBL" id="Y16881">
    <property type="protein sequence ID" value="CAA76494.1"/>
    <property type="molecule type" value="Genomic_DNA"/>
</dbReference>
<dbReference type="SMR" id="O60048"/>
<dbReference type="VEuPathDB" id="FungiDB:PC9H_004807"/>
<dbReference type="VEuPathDB" id="FungiDB:PLEOSDRAFT_1091049"/>
<dbReference type="GO" id="GO:0005576">
    <property type="term" value="C:extracellular region"/>
    <property type="evidence" value="ECO:0007669"/>
    <property type="project" value="UniProtKB-KW"/>
</dbReference>
<dbReference type="GO" id="GO:0009277">
    <property type="term" value="C:fungal-type cell wall"/>
    <property type="evidence" value="ECO:0007669"/>
    <property type="project" value="InterPro"/>
</dbReference>
<dbReference type="GO" id="GO:0005199">
    <property type="term" value="F:structural constituent of cell wall"/>
    <property type="evidence" value="ECO:0007669"/>
    <property type="project" value="InterPro"/>
</dbReference>
<dbReference type="CDD" id="cd23507">
    <property type="entry name" value="hydrophobin_I"/>
    <property type="match status" value="1"/>
</dbReference>
<dbReference type="InterPro" id="IPR001338">
    <property type="entry name" value="Hydrophobin"/>
</dbReference>
<dbReference type="Pfam" id="PF01185">
    <property type="entry name" value="Hydrophobin"/>
    <property type="match status" value="1"/>
</dbReference>
<dbReference type="SMART" id="SM00075">
    <property type="entry name" value="HYDRO"/>
    <property type="match status" value="1"/>
</dbReference>